<organism>
    <name type="scientific">Haliotis diversicolor</name>
    <name type="common">Abalone</name>
    <name type="synonym">Sulculus diversicolor</name>
    <dbReference type="NCBI Taxonomy" id="36095"/>
    <lineage>
        <taxon>Eukaryota</taxon>
        <taxon>Metazoa</taxon>
        <taxon>Spiralia</taxon>
        <taxon>Lophotrochozoa</taxon>
        <taxon>Mollusca</taxon>
        <taxon>Gastropoda</taxon>
        <taxon>Vetigastropoda</taxon>
        <taxon>Lepetellida</taxon>
        <taxon>Haliotoidea</taxon>
        <taxon>Haliotidae</taxon>
        <taxon>Haliotis</taxon>
    </lineage>
</organism>
<comment type="function">
    <text>Serves a reserve supply of oxygen and facilitates the movement of oxygen within muscles.</text>
</comment>
<comment type="cofactor">
    <cofactor>
        <name>heme</name>
        <dbReference type="ChEBI" id="CHEBI:30413"/>
    </cofactor>
    <text>Binds 1 heme group per subunit.</text>
</comment>
<comment type="subunit">
    <text>Homodimer.</text>
</comment>
<comment type="miscellaneous">
    <text>In the presence of tryptophan, the autoxidation rate of the protein is greatly accelerated (25 times).</text>
</comment>
<comment type="similarity">
    <text evidence="4">Belongs to the indoleamine 2,3-dioxygenase family.</text>
</comment>
<accession>Q01966</accession>
<accession>Q26485</accession>
<dbReference type="EMBL" id="X68336">
    <property type="protein sequence ID" value="CAA48412.1"/>
    <property type="molecule type" value="mRNA"/>
</dbReference>
<dbReference type="EMBL" id="D83984">
    <property type="protein sequence ID" value="BAA18961.1"/>
    <property type="molecule type" value="Genomic_DNA"/>
</dbReference>
<dbReference type="PIR" id="S72172">
    <property type="entry name" value="S72172"/>
</dbReference>
<dbReference type="SMR" id="Q01966"/>
<dbReference type="GO" id="GO:0005737">
    <property type="term" value="C:cytoplasm"/>
    <property type="evidence" value="ECO:0007669"/>
    <property type="project" value="TreeGrafter"/>
</dbReference>
<dbReference type="GO" id="GO:0020037">
    <property type="term" value="F:heme binding"/>
    <property type="evidence" value="ECO:0007669"/>
    <property type="project" value="InterPro"/>
</dbReference>
<dbReference type="GO" id="GO:0033754">
    <property type="term" value="F:indoleamine 2,3-dioxygenase activity"/>
    <property type="evidence" value="ECO:0007669"/>
    <property type="project" value="TreeGrafter"/>
</dbReference>
<dbReference type="GO" id="GO:0046872">
    <property type="term" value="F:metal ion binding"/>
    <property type="evidence" value="ECO:0007669"/>
    <property type="project" value="UniProtKB-KW"/>
</dbReference>
<dbReference type="GO" id="GO:0005344">
    <property type="term" value="F:oxygen carrier activity"/>
    <property type="evidence" value="ECO:0007669"/>
    <property type="project" value="UniProtKB-KW"/>
</dbReference>
<dbReference type="GO" id="GO:0004833">
    <property type="term" value="F:tryptophan 2,3-dioxygenase activity"/>
    <property type="evidence" value="ECO:0007669"/>
    <property type="project" value="TreeGrafter"/>
</dbReference>
<dbReference type="GO" id="GO:0034354">
    <property type="term" value="P:'de novo' NAD biosynthetic process from L-tryptophan"/>
    <property type="evidence" value="ECO:0007669"/>
    <property type="project" value="TreeGrafter"/>
</dbReference>
<dbReference type="GO" id="GO:0019441">
    <property type="term" value="P:L-tryptophan catabolic process to kynurenine"/>
    <property type="evidence" value="ECO:0007669"/>
    <property type="project" value="InterPro"/>
</dbReference>
<dbReference type="Gene3D" id="1.20.58.480">
    <property type="match status" value="1"/>
</dbReference>
<dbReference type="InterPro" id="IPR000898">
    <property type="entry name" value="Indolamine_dOase"/>
</dbReference>
<dbReference type="InterPro" id="IPR037217">
    <property type="entry name" value="Trp/Indoleamine_2_3_dOase-like"/>
</dbReference>
<dbReference type="PANTHER" id="PTHR28657">
    <property type="entry name" value="INDOLEAMINE 2,3-DIOXYGENASE"/>
    <property type="match status" value="1"/>
</dbReference>
<dbReference type="PANTHER" id="PTHR28657:SF5">
    <property type="entry name" value="INDOLEAMINE 2,3-DIOXYGENASE"/>
    <property type="match status" value="1"/>
</dbReference>
<dbReference type="Pfam" id="PF01231">
    <property type="entry name" value="IDO"/>
    <property type="match status" value="1"/>
</dbReference>
<dbReference type="SUPFAM" id="SSF140959">
    <property type="entry name" value="Indolic compounds 2,3-dioxygenase-like"/>
    <property type="match status" value="1"/>
</dbReference>
<dbReference type="PROSITE" id="PS00876">
    <property type="entry name" value="IDO_1"/>
    <property type="match status" value="1"/>
</dbReference>
<dbReference type="PROSITE" id="PS00877">
    <property type="entry name" value="IDO_2"/>
    <property type="match status" value="1"/>
</dbReference>
<evidence type="ECO:0000250" key="1"/>
<evidence type="ECO:0000269" key="2">
    <source>
    </source>
</evidence>
<evidence type="ECO:0000269" key="3">
    <source>
    </source>
</evidence>
<evidence type="ECO:0000305" key="4"/>
<protein>
    <recommendedName>
        <fullName>Myoglobin</fullName>
    </recommendedName>
</protein>
<reference key="1">
    <citation type="journal article" date="1992" name="J. Mol. Biol.">
        <title>A myoglobin evolved from indoleamine 2,3-dioxygenase.</title>
        <authorList>
            <person name="Suzuki T."/>
            <person name="Takagi T."/>
        </authorList>
    </citation>
    <scope>NUCLEOTIDE SEQUENCE [MRNA]</scope>
    <scope>PARTIAL PROTEIN SEQUENCE</scope>
    <source>
        <strain>Aquatilis</strain>
        <tissue>Red muscle</tissue>
    </source>
</reference>
<reference key="2">
    <citation type="journal article" date="1996" name="Biochim. Biophys. Acta">
        <title>Convergent evolution. The gene structure of Sulculus 41 kDa myoglobin is homologous with that of human indoleamine dioxygenase.</title>
        <authorList>
            <person name="Suzuki T."/>
            <person name="Yuasa H."/>
            <person name="Imai K."/>
        </authorList>
    </citation>
    <scope>NUCLEOTIDE SEQUENCE [GENOMIC DNA]</scope>
</reference>
<reference key="3">
    <citation type="journal article" date="1989" name="Experientia">
        <title>The ear-shell (Sulculus diversicolor aquatilis) myoglobin is composed of an unusual 39 kDa polypeptide chain.</title>
        <authorList>
            <person name="Suzuki T."/>
            <person name="Furukohri T."/>
        </authorList>
    </citation>
    <scope>PARTIAL PROTEIN SEQUENCE</scope>
</reference>
<keyword id="KW-0903">Direct protein sequencing</keyword>
<keyword id="KW-0349">Heme</keyword>
<keyword id="KW-0408">Iron</keyword>
<keyword id="KW-0479">Metal-binding</keyword>
<keyword id="KW-0561">Oxygen transport</keyword>
<keyword id="KW-0813">Transport</keyword>
<name>MYG_HALDV</name>
<feature type="initiator methionine" description="Removed">
    <location>
        <position position="1"/>
    </location>
</feature>
<feature type="chain" id="PRO_0000215207" description="Myoglobin">
    <location>
        <begin position="2"/>
        <end position="378"/>
    </location>
</feature>
<feature type="binding site" description="proximal binding residue" evidence="1">
    <location>
        <position position="332"/>
    </location>
    <ligand>
        <name>heme</name>
        <dbReference type="ChEBI" id="CHEBI:30413"/>
    </ligand>
    <ligandPart>
        <name>Fe</name>
        <dbReference type="ChEBI" id="CHEBI:18248"/>
    </ligandPart>
</feature>
<feature type="modified residue" description="Blocked amino end (Ala)" evidence="2 3">
    <location>
        <position position="2"/>
    </location>
</feature>
<feature type="sequence conflict" description="In Ref. 3; AA sequence." evidence="4" ref="3">
    <original>W</original>
    <variation>G</variation>
    <location>
        <position position="33"/>
    </location>
</feature>
<feature type="sequence conflict" description="In Ref. 3; AA sequence." evidence="4" ref="3">
    <original>L</original>
    <variation>G</variation>
    <location>
        <position position="112"/>
    </location>
</feature>
<feature type="sequence conflict" description="In Ref. 3; AA sequence." evidence="4" ref="3">
    <original>S</original>
    <variation>G</variation>
    <location>
        <position position="185"/>
    </location>
</feature>
<feature type="sequence conflict" description="In Ref. 3; AA sequence." evidence="4" ref="3">
    <original>T</original>
    <variation>G</variation>
    <location>
        <position position="192"/>
    </location>
</feature>
<feature type="sequence conflict" description="In Ref. 3; AA sequence." evidence="4" ref="3">
    <original>G</original>
    <variation>A</variation>
    <location>
        <position position="195"/>
    </location>
</feature>
<feature type="sequence conflict" description="In Ref. 3; AA sequence." evidence="4" ref="3">
    <original>R</original>
    <variation>E</variation>
    <location>
        <position position="218"/>
    </location>
</feature>
<feature type="sequence conflict" description="In Ref. 3; AA sequence." evidence="4" ref="3">
    <original>K</original>
    <variation>G</variation>
    <location>
        <position position="355"/>
    </location>
</feature>
<feature type="sequence conflict" description="In Ref. 3; AA sequence." evidence="4" ref="3">
    <original>E</original>
    <variation>Q</variation>
    <location>
        <position position="374"/>
    </location>
</feature>
<sequence>MADIQLSKYHVSKDIGFLLEPLQDVLPDYFAPWNRLAKSLPDLVASHKFRDAVKEMPLLDSSKLAGYRQKRLAHLQLVLITSGYLWQEGEGGAVQRLPECVAKPLWNVSNDLGLKPVLTYGDVCLTNCRVKGGDIEVMYNLPGGAGTEWFLKVCGLVELTLGKGAQSVQNVLDGAKANDKAKMTSGLTELTTTIGNMQAALAKMNDNLTPDHFYNVLRPFLGGFGGPASPISGGLIYEGVSDAPVTMIGGSAAQSSAMQLLDNLLGVTHSPDKQAFLDEISNYMIPAHKQLLADLTKMPRKVPQIVAEAKDANLSKAYSGCVAALTQYRTYHIQVVTKYIVTASKSDSPKSLAYKDTGKSDLIPFLKEVRDDTEKMQK</sequence>
<proteinExistence type="evidence at protein level"/>